<gene>
    <name evidence="1" type="primary">pafA</name>
    <name type="ordered locus">SAV_6685</name>
</gene>
<sequence>MDRRIFGLENEYGVTCTFRGQRRLSPDEVARYLFRRVVSWGRSSNVFLRNGARLYLDVGSHPEYATPECDNVTELVTHDKAGERILEGLLVDAERRLHEEGIAGDVYLFKNNTDSAGNSYGCHENYLVARHGEFSRLADILIPFLVTRQLLCGAGKVLQTPRGAVYCVSQRAEHIWEGVSSATTRSRPIINTRDEPHADAERYRRLHVIVGDSNMSETTMLLKVGATDLVLRMIEAGTVMRDLTLENPIRAIREVSHDITGRRKVRLASGREASALEVQREYYEKAVDFCERRGIRTGTVEQVLELWGRTLDAIEAEDLDRIGTEIDWVMKYKLIERYRAKHNMTMSHPRVAQIDLAYHDIHRRRGLYYLLEKRGQATRICNDLKIFEGKSVPPQTTRARLRGDFIRRAQEQRRDFTVDWVHLKLNDQAQRTVLCKDPFRSVDDRVEKLIAGM</sequence>
<proteinExistence type="inferred from homology"/>
<name>PAFA_STRAW</name>
<feature type="chain" id="PRO_0000395955" description="Pup--protein ligase">
    <location>
        <begin position="1"/>
        <end position="453"/>
    </location>
</feature>
<feature type="active site" description="Proton acceptor" evidence="1">
    <location>
        <position position="57"/>
    </location>
</feature>
<feature type="binding site" evidence="1">
    <location>
        <position position="9"/>
    </location>
    <ligand>
        <name>Mg(2+)</name>
        <dbReference type="ChEBI" id="CHEBI:18420"/>
    </ligand>
</feature>
<feature type="binding site" evidence="1">
    <location>
        <position position="53"/>
    </location>
    <ligand>
        <name>ATP</name>
        <dbReference type="ChEBI" id="CHEBI:30616"/>
    </ligand>
</feature>
<feature type="binding site" evidence="1">
    <location>
        <position position="55"/>
    </location>
    <ligand>
        <name>Mg(2+)</name>
        <dbReference type="ChEBI" id="CHEBI:18420"/>
    </ligand>
</feature>
<feature type="binding site" evidence="1">
    <location>
        <position position="63"/>
    </location>
    <ligand>
        <name>Mg(2+)</name>
        <dbReference type="ChEBI" id="CHEBI:18420"/>
    </ligand>
</feature>
<feature type="binding site" evidence="1">
    <location>
        <position position="66"/>
    </location>
    <ligand>
        <name>ATP</name>
        <dbReference type="ChEBI" id="CHEBI:30616"/>
    </ligand>
</feature>
<feature type="binding site" evidence="1">
    <location>
        <position position="420"/>
    </location>
    <ligand>
        <name>ATP</name>
        <dbReference type="ChEBI" id="CHEBI:30616"/>
    </ligand>
</feature>
<accession>Q828I4</accession>
<protein>
    <recommendedName>
        <fullName evidence="1">Pup--protein ligase</fullName>
        <ecNumber evidence="1">6.3.1.19</ecNumber>
    </recommendedName>
    <alternativeName>
        <fullName evidence="1">Proteasome accessory factor A</fullName>
    </alternativeName>
    <alternativeName>
        <fullName evidence="1">Pup-conjugating enzyme</fullName>
    </alternativeName>
</protein>
<reference key="1">
    <citation type="journal article" date="2001" name="Proc. Natl. Acad. Sci. U.S.A.">
        <title>Genome sequence of an industrial microorganism Streptomyces avermitilis: deducing the ability of producing secondary metabolites.</title>
        <authorList>
            <person name="Omura S."/>
            <person name="Ikeda H."/>
            <person name="Ishikawa J."/>
            <person name="Hanamoto A."/>
            <person name="Takahashi C."/>
            <person name="Shinose M."/>
            <person name="Takahashi Y."/>
            <person name="Horikawa H."/>
            <person name="Nakazawa H."/>
            <person name="Osonoe T."/>
            <person name="Kikuchi H."/>
            <person name="Shiba T."/>
            <person name="Sakaki Y."/>
            <person name="Hattori M."/>
        </authorList>
    </citation>
    <scope>NUCLEOTIDE SEQUENCE [LARGE SCALE GENOMIC DNA]</scope>
    <source>
        <strain>ATCC 31267 / DSM 46492 / JCM 5070 / NBRC 14893 / NCIMB 12804 / NRRL 8165 / MA-4680</strain>
    </source>
</reference>
<reference key="2">
    <citation type="journal article" date="2003" name="Nat. Biotechnol.">
        <title>Complete genome sequence and comparative analysis of the industrial microorganism Streptomyces avermitilis.</title>
        <authorList>
            <person name="Ikeda H."/>
            <person name="Ishikawa J."/>
            <person name="Hanamoto A."/>
            <person name="Shinose M."/>
            <person name="Kikuchi H."/>
            <person name="Shiba T."/>
            <person name="Sakaki Y."/>
            <person name="Hattori M."/>
            <person name="Omura S."/>
        </authorList>
    </citation>
    <scope>NUCLEOTIDE SEQUENCE [LARGE SCALE GENOMIC DNA]</scope>
    <source>
        <strain>ATCC 31267 / DSM 46492 / JCM 5070 / NBRC 14893 / NCIMB 12804 / NRRL 8165 / MA-4680</strain>
    </source>
</reference>
<organism>
    <name type="scientific">Streptomyces avermitilis (strain ATCC 31267 / DSM 46492 / JCM 5070 / NBRC 14893 / NCIMB 12804 / NRRL 8165 / MA-4680)</name>
    <dbReference type="NCBI Taxonomy" id="227882"/>
    <lineage>
        <taxon>Bacteria</taxon>
        <taxon>Bacillati</taxon>
        <taxon>Actinomycetota</taxon>
        <taxon>Actinomycetes</taxon>
        <taxon>Kitasatosporales</taxon>
        <taxon>Streptomycetaceae</taxon>
        <taxon>Streptomyces</taxon>
    </lineage>
</organism>
<comment type="function">
    <text evidence="1">Catalyzes the covalent attachment of the prokaryotic ubiquitin-like protein modifier Pup to the proteasomal substrate proteins, thereby targeting them for proteasomal degradation. This tagging system is termed pupylation. The ligation reaction involves the side-chain carboxylate of the C-terminal glutamate of Pup and the side-chain amino group of a substrate lysine.</text>
</comment>
<comment type="catalytic activity">
    <reaction evidence="1">
        <text>ATP + [prokaryotic ubiquitin-like protein]-L-glutamate + [protein]-L-lysine = ADP + phosphate + N(6)-([prokaryotic ubiquitin-like protein]-gamma-L-glutamyl)-[protein]-L-lysine.</text>
        <dbReference type="EC" id="6.3.1.19"/>
    </reaction>
</comment>
<comment type="pathway">
    <text evidence="1">Protein degradation; proteasomal Pup-dependent pathway.</text>
</comment>
<comment type="pathway">
    <text evidence="1">Protein modification; protein pupylation.</text>
</comment>
<comment type="miscellaneous">
    <text evidence="1">The reaction mechanism probably proceeds via the activation of Pup by phosphorylation of its C-terminal glutamate, which is then subject to nucleophilic attack by the substrate lysine, resulting in an isopeptide bond and the release of phosphate as a good leaving group.</text>
</comment>
<comment type="similarity">
    <text evidence="1">Belongs to the Pup ligase/Pup deamidase family. Pup-conjugating enzyme subfamily.</text>
</comment>
<dbReference type="EC" id="6.3.1.19" evidence="1"/>
<dbReference type="EMBL" id="BA000030">
    <property type="protein sequence ID" value="BAC74396.1"/>
    <property type="molecule type" value="Genomic_DNA"/>
</dbReference>
<dbReference type="RefSeq" id="WP_010988085.1">
    <property type="nucleotide sequence ID" value="NZ_JZJK01000082.1"/>
</dbReference>
<dbReference type="SMR" id="Q828I4"/>
<dbReference type="GeneID" id="41543755"/>
<dbReference type="KEGG" id="sma:SAVERM_6685"/>
<dbReference type="eggNOG" id="COG0638">
    <property type="taxonomic scope" value="Bacteria"/>
</dbReference>
<dbReference type="HOGENOM" id="CLU_040524_0_1_11"/>
<dbReference type="OrthoDB" id="9760627at2"/>
<dbReference type="UniPathway" id="UPA00997"/>
<dbReference type="UniPathway" id="UPA00998"/>
<dbReference type="Proteomes" id="UP000000428">
    <property type="component" value="Chromosome"/>
</dbReference>
<dbReference type="GO" id="GO:0005524">
    <property type="term" value="F:ATP binding"/>
    <property type="evidence" value="ECO:0007669"/>
    <property type="project" value="UniProtKB-UniRule"/>
</dbReference>
<dbReference type="GO" id="GO:0016879">
    <property type="term" value="F:ligase activity, forming carbon-nitrogen bonds"/>
    <property type="evidence" value="ECO:0007669"/>
    <property type="project" value="InterPro"/>
</dbReference>
<dbReference type="GO" id="GO:0000287">
    <property type="term" value="F:magnesium ion binding"/>
    <property type="evidence" value="ECO:0007669"/>
    <property type="project" value="UniProtKB-UniRule"/>
</dbReference>
<dbReference type="GO" id="GO:0019787">
    <property type="term" value="F:ubiquitin-like protein transferase activity"/>
    <property type="evidence" value="ECO:0007669"/>
    <property type="project" value="UniProtKB-UniRule"/>
</dbReference>
<dbReference type="GO" id="GO:0019941">
    <property type="term" value="P:modification-dependent protein catabolic process"/>
    <property type="evidence" value="ECO:0007669"/>
    <property type="project" value="UniProtKB-UniRule"/>
</dbReference>
<dbReference type="GO" id="GO:0010498">
    <property type="term" value="P:proteasomal protein catabolic process"/>
    <property type="evidence" value="ECO:0007669"/>
    <property type="project" value="UniProtKB-UniRule"/>
</dbReference>
<dbReference type="GO" id="GO:0070490">
    <property type="term" value="P:protein pupylation"/>
    <property type="evidence" value="ECO:0007669"/>
    <property type="project" value="UniProtKB-UniRule"/>
</dbReference>
<dbReference type="HAMAP" id="MF_02111">
    <property type="entry name" value="Pup_ligase"/>
    <property type="match status" value="1"/>
</dbReference>
<dbReference type="InterPro" id="IPR022279">
    <property type="entry name" value="Pup_ligase"/>
</dbReference>
<dbReference type="InterPro" id="IPR004347">
    <property type="entry name" value="Pup_ligase/deamidase"/>
</dbReference>
<dbReference type="NCBIfam" id="TIGR03686">
    <property type="entry name" value="pupylate_PafA"/>
    <property type="match status" value="1"/>
</dbReference>
<dbReference type="PANTHER" id="PTHR42307">
    <property type="entry name" value="PUP DEAMIDASE/DEPUPYLASE"/>
    <property type="match status" value="1"/>
</dbReference>
<dbReference type="PANTHER" id="PTHR42307:SF3">
    <property type="entry name" value="PUP--PROTEIN LIGASE"/>
    <property type="match status" value="1"/>
</dbReference>
<dbReference type="Pfam" id="PF03136">
    <property type="entry name" value="Pup_ligase"/>
    <property type="match status" value="1"/>
</dbReference>
<dbReference type="PIRSF" id="PIRSF018077">
    <property type="entry name" value="UCP018077"/>
    <property type="match status" value="1"/>
</dbReference>
<keyword id="KW-0067">ATP-binding</keyword>
<keyword id="KW-0436">Ligase</keyword>
<keyword id="KW-0460">Magnesium</keyword>
<keyword id="KW-0479">Metal-binding</keyword>
<keyword id="KW-0547">Nucleotide-binding</keyword>
<keyword id="KW-1185">Reference proteome</keyword>
<keyword id="KW-0833">Ubl conjugation pathway</keyword>
<evidence type="ECO:0000255" key="1">
    <source>
        <dbReference type="HAMAP-Rule" id="MF_02111"/>
    </source>
</evidence>